<name>MTNN_HISS1</name>
<organism>
    <name type="scientific">Histophilus somni (strain 129Pt)</name>
    <name type="common">Haemophilus somnus</name>
    <dbReference type="NCBI Taxonomy" id="205914"/>
    <lineage>
        <taxon>Bacteria</taxon>
        <taxon>Pseudomonadati</taxon>
        <taxon>Pseudomonadota</taxon>
        <taxon>Gammaproteobacteria</taxon>
        <taxon>Pasteurellales</taxon>
        <taxon>Pasteurellaceae</taxon>
        <taxon>Histophilus</taxon>
    </lineage>
</organism>
<proteinExistence type="inferred from homology"/>
<sequence>MKVGIVGAMAQEVEILASLIENKNVVHIAGCTIYQGNIQDKEVALLQSGIGKVAAAMGTTLLLQMFKPDIVINTGSAGGVSSGLKVGDVVVSTQTVYHDADVTAFGYAKGQLPACPPAFISDPKLTALVANVAKQQGINLTSGLICSGDSFINSAEKLAWIKANFPEVVAIEMEATAIAQVCHKFNIPFVVIRAISDVGDGEASMSFEEFLPLAAKQSSSMVLKILQSL</sequence>
<evidence type="ECO:0000255" key="1">
    <source>
        <dbReference type="HAMAP-Rule" id="MF_01684"/>
    </source>
</evidence>
<feature type="chain" id="PRO_0000359308" description="5'-methylthioadenosine/S-adenosylhomocysteine nucleosidase">
    <location>
        <begin position="1"/>
        <end position="229"/>
    </location>
</feature>
<feature type="active site" description="Proton acceptor" evidence="1">
    <location>
        <position position="12"/>
    </location>
</feature>
<feature type="active site" description="Proton donor" evidence="1">
    <location>
        <position position="197"/>
    </location>
</feature>
<feature type="binding site" evidence="1">
    <location>
        <position position="78"/>
    </location>
    <ligand>
        <name>substrate</name>
    </ligand>
</feature>
<feature type="binding site" evidence="1">
    <location>
        <position position="152"/>
    </location>
    <ligand>
        <name>substrate</name>
    </ligand>
</feature>
<feature type="binding site" evidence="1">
    <location>
        <begin position="173"/>
        <end position="174"/>
    </location>
    <ligand>
        <name>substrate</name>
    </ligand>
</feature>
<protein>
    <recommendedName>
        <fullName evidence="1">5'-methylthioadenosine/S-adenosylhomocysteine nucleosidase</fullName>
        <shortName evidence="1">MTA/SAH nucleosidase</shortName>
        <shortName evidence="1">MTAN</shortName>
        <ecNumber evidence="1">3.2.2.9</ecNumber>
    </recommendedName>
    <alternativeName>
        <fullName evidence="1">5'-deoxyadenosine nucleosidase</fullName>
        <shortName evidence="1">DOA nucleosidase</shortName>
        <shortName evidence="1">dAdo nucleosidase</shortName>
    </alternativeName>
    <alternativeName>
        <fullName evidence="1">5'-methylthioadenosine nucleosidase</fullName>
        <shortName evidence="1">MTA nucleosidase</shortName>
    </alternativeName>
    <alternativeName>
        <fullName evidence="1">S-adenosylhomocysteine nucleosidase</fullName>
        <shortName evidence="1">AdoHcy nucleosidase</shortName>
        <shortName evidence="1">SAH nucleosidase</shortName>
        <shortName evidence="1">SRH nucleosidase</shortName>
    </alternativeName>
</protein>
<keyword id="KW-0028">Amino-acid biosynthesis</keyword>
<keyword id="KW-0378">Hydrolase</keyword>
<keyword id="KW-0486">Methionine biosynthesis</keyword>
<accession>Q0I5K4</accession>
<dbReference type="EC" id="3.2.2.9" evidence="1"/>
<dbReference type="EMBL" id="CP000436">
    <property type="protein sequence ID" value="ABI25746.1"/>
    <property type="molecule type" value="Genomic_DNA"/>
</dbReference>
<dbReference type="SMR" id="Q0I5K4"/>
<dbReference type="KEGG" id="hso:HS_1473"/>
<dbReference type="eggNOG" id="COG0775">
    <property type="taxonomic scope" value="Bacteria"/>
</dbReference>
<dbReference type="HOGENOM" id="CLU_031248_2_2_6"/>
<dbReference type="UniPathway" id="UPA00904">
    <property type="reaction ID" value="UER00871"/>
</dbReference>
<dbReference type="GO" id="GO:0005829">
    <property type="term" value="C:cytosol"/>
    <property type="evidence" value="ECO:0007669"/>
    <property type="project" value="TreeGrafter"/>
</dbReference>
<dbReference type="GO" id="GO:0008782">
    <property type="term" value="F:adenosylhomocysteine nucleosidase activity"/>
    <property type="evidence" value="ECO:0007669"/>
    <property type="project" value="UniProtKB-UniRule"/>
</dbReference>
<dbReference type="GO" id="GO:0008930">
    <property type="term" value="F:methylthioadenosine nucleosidase activity"/>
    <property type="evidence" value="ECO:0007669"/>
    <property type="project" value="UniProtKB-UniRule"/>
</dbReference>
<dbReference type="GO" id="GO:0019509">
    <property type="term" value="P:L-methionine salvage from methylthioadenosine"/>
    <property type="evidence" value="ECO:0007669"/>
    <property type="project" value="UniProtKB-UniRule"/>
</dbReference>
<dbReference type="GO" id="GO:0019284">
    <property type="term" value="P:L-methionine salvage from S-adenosylmethionine"/>
    <property type="evidence" value="ECO:0007669"/>
    <property type="project" value="TreeGrafter"/>
</dbReference>
<dbReference type="GO" id="GO:0009164">
    <property type="term" value="P:nucleoside catabolic process"/>
    <property type="evidence" value="ECO:0007669"/>
    <property type="project" value="InterPro"/>
</dbReference>
<dbReference type="CDD" id="cd09008">
    <property type="entry name" value="MTAN"/>
    <property type="match status" value="1"/>
</dbReference>
<dbReference type="FunFam" id="3.40.50.1580:FF:000001">
    <property type="entry name" value="MTA/SAH nucleosidase family protein"/>
    <property type="match status" value="1"/>
</dbReference>
<dbReference type="Gene3D" id="3.40.50.1580">
    <property type="entry name" value="Nucleoside phosphorylase domain"/>
    <property type="match status" value="1"/>
</dbReference>
<dbReference type="HAMAP" id="MF_01684">
    <property type="entry name" value="Salvage_MtnN"/>
    <property type="match status" value="1"/>
</dbReference>
<dbReference type="InterPro" id="IPR010049">
    <property type="entry name" value="MTA_SAH_Nsdase"/>
</dbReference>
<dbReference type="InterPro" id="IPR000845">
    <property type="entry name" value="Nucleoside_phosphorylase_d"/>
</dbReference>
<dbReference type="InterPro" id="IPR035994">
    <property type="entry name" value="Nucleoside_phosphorylase_sf"/>
</dbReference>
<dbReference type="NCBIfam" id="TIGR01704">
    <property type="entry name" value="MTA_SAH-Nsdase"/>
    <property type="match status" value="1"/>
</dbReference>
<dbReference type="NCBIfam" id="NF004079">
    <property type="entry name" value="PRK05584.1"/>
    <property type="match status" value="1"/>
</dbReference>
<dbReference type="PANTHER" id="PTHR46832">
    <property type="entry name" value="5'-METHYLTHIOADENOSINE/S-ADENOSYLHOMOCYSTEINE NUCLEOSIDASE"/>
    <property type="match status" value="1"/>
</dbReference>
<dbReference type="PANTHER" id="PTHR46832:SF1">
    <property type="entry name" value="5'-METHYLTHIOADENOSINE_S-ADENOSYLHOMOCYSTEINE NUCLEOSIDASE"/>
    <property type="match status" value="1"/>
</dbReference>
<dbReference type="Pfam" id="PF01048">
    <property type="entry name" value="PNP_UDP_1"/>
    <property type="match status" value="1"/>
</dbReference>
<dbReference type="SUPFAM" id="SSF53167">
    <property type="entry name" value="Purine and uridine phosphorylases"/>
    <property type="match status" value="1"/>
</dbReference>
<gene>
    <name evidence="1" type="primary">mtnN</name>
    <name type="ordered locus">HS_1473</name>
</gene>
<comment type="function">
    <text evidence="1">Catalyzes the irreversible cleavage of the glycosidic bond in both 5'-methylthioadenosine (MTA) and S-adenosylhomocysteine (SAH/AdoHcy) to adenine and the corresponding thioribose, 5'-methylthioribose and S-ribosylhomocysteine, respectively. Also cleaves 5'-deoxyadenosine, a toxic by-product of radical S-adenosylmethionine (SAM) enzymes, into 5-deoxyribose and adenine.</text>
</comment>
<comment type="catalytic activity">
    <reaction evidence="1">
        <text>S-adenosyl-L-homocysteine + H2O = S-(5-deoxy-D-ribos-5-yl)-L-homocysteine + adenine</text>
        <dbReference type="Rhea" id="RHEA:17805"/>
        <dbReference type="ChEBI" id="CHEBI:15377"/>
        <dbReference type="ChEBI" id="CHEBI:16708"/>
        <dbReference type="ChEBI" id="CHEBI:57856"/>
        <dbReference type="ChEBI" id="CHEBI:58195"/>
        <dbReference type="EC" id="3.2.2.9"/>
    </reaction>
</comment>
<comment type="catalytic activity">
    <reaction evidence="1">
        <text>S-methyl-5'-thioadenosine + H2O = 5-(methylsulfanyl)-D-ribose + adenine</text>
        <dbReference type="Rhea" id="RHEA:13617"/>
        <dbReference type="ChEBI" id="CHEBI:15377"/>
        <dbReference type="ChEBI" id="CHEBI:16708"/>
        <dbReference type="ChEBI" id="CHEBI:17509"/>
        <dbReference type="ChEBI" id="CHEBI:78440"/>
        <dbReference type="EC" id="3.2.2.9"/>
    </reaction>
</comment>
<comment type="catalytic activity">
    <reaction evidence="1">
        <text>5'-deoxyadenosine + H2O = 5-deoxy-D-ribose + adenine</text>
        <dbReference type="Rhea" id="RHEA:29859"/>
        <dbReference type="ChEBI" id="CHEBI:15377"/>
        <dbReference type="ChEBI" id="CHEBI:16708"/>
        <dbReference type="ChEBI" id="CHEBI:17319"/>
        <dbReference type="ChEBI" id="CHEBI:149540"/>
        <dbReference type="EC" id="3.2.2.9"/>
    </reaction>
    <physiologicalReaction direction="left-to-right" evidence="1">
        <dbReference type="Rhea" id="RHEA:29860"/>
    </physiologicalReaction>
</comment>
<comment type="pathway">
    <text evidence="1">Amino-acid biosynthesis; L-methionine biosynthesis via salvage pathway; S-methyl-5-thio-alpha-D-ribose 1-phosphate from S-methyl-5'-thioadenosine (hydrolase route): step 1/2.</text>
</comment>
<comment type="similarity">
    <text evidence="1">Belongs to the PNP/UDP phosphorylase family. MtnN subfamily.</text>
</comment>
<reference key="1">
    <citation type="journal article" date="2007" name="J. Bacteriol.">
        <title>Complete genome sequence of Haemophilus somnus (Histophilus somni) strain 129Pt and comparison to Haemophilus ducreyi 35000HP and Haemophilus influenzae Rd.</title>
        <authorList>
            <person name="Challacombe J.F."/>
            <person name="Duncan A.J."/>
            <person name="Brettin T.S."/>
            <person name="Bruce D."/>
            <person name="Chertkov O."/>
            <person name="Detter J.C."/>
            <person name="Han C.S."/>
            <person name="Misra M."/>
            <person name="Richardson P."/>
            <person name="Tapia R."/>
            <person name="Thayer N."/>
            <person name="Xie G."/>
            <person name="Inzana T.J."/>
        </authorList>
    </citation>
    <scope>NUCLEOTIDE SEQUENCE [LARGE SCALE GENOMIC DNA]</scope>
    <source>
        <strain>129Pt</strain>
    </source>
</reference>